<name>RS16_DEIRA</name>
<feature type="chain" id="PRO_0000167182" description="Small ribosomal subunit protein bS16">
    <location>
        <begin position="1"/>
        <end position="84"/>
    </location>
</feature>
<organism>
    <name type="scientific">Deinococcus radiodurans (strain ATCC 13939 / DSM 20539 / JCM 16871 / CCUG 27074 / LMG 4051 / NBRC 15346 / NCIMB 9279 / VKM B-1422 / R1)</name>
    <dbReference type="NCBI Taxonomy" id="243230"/>
    <lineage>
        <taxon>Bacteria</taxon>
        <taxon>Thermotogati</taxon>
        <taxon>Deinococcota</taxon>
        <taxon>Deinococci</taxon>
        <taxon>Deinococcales</taxon>
        <taxon>Deinococcaceae</taxon>
        <taxon>Deinococcus</taxon>
    </lineage>
</organism>
<sequence length="84" mass="9667">MVKIRLSRFGSAHNPHYRIVVADVRRPRDGGYIESLGHYDPRKTSENFLKIDVERANHWIAQGAQPTDTARRLLRSQGVKISKK</sequence>
<evidence type="ECO:0000255" key="1">
    <source>
        <dbReference type="HAMAP-Rule" id="MF_00385"/>
    </source>
</evidence>
<evidence type="ECO:0000305" key="2"/>
<gene>
    <name evidence="1" type="primary">rpsP</name>
    <name type="ordered locus">DR_1294</name>
</gene>
<comment type="similarity">
    <text evidence="1">Belongs to the bacterial ribosomal protein bS16 family.</text>
</comment>
<dbReference type="EMBL" id="AE000513">
    <property type="protein sequence ID" value="AAF10863.1"/>
    <property type="molecule type" value="Genomic_DNA"/>
</dbReference>
<dbReference type="PIR" id="D75414">
    <property type="entry name" value="D75414"/>
</dbReference>
<dbReference type="RefSeq" id="NP_295018.1">
    <property type="nucleotide sequence ID" value="NC_001263.1"/>
</dbReference>
<dbReference type="RefSeq" id="WP_010887937.1">
    <property type="nucleotide sequence ID" value="NC_001263.1"/>
</dbReference>
<dbReference type="SMR" id="Q9RUT7"/>
<dbReference type="FunCoup" id="Q9RUT7">
    <property type="interactions" value="432"/>
</dbReference>
<dbReference type="STRING" id="243230.DR_1294"/>
<dbReference type="PaxDb" id="243230-DR_1294"/>
<dbReference type="EnsemblBacteria" id="AAF10863">
    <property type="protein sequence ID" value="AAF10863"/>
    <property type="gene ID" value="DR_1294"/>
</dbReference>
<dbReference type="GeneID" id="69517541"/>
<dbReference type="KEGG" id="dra:DR_1294"/>
<dbReference type="PATRIC" id="fig|243230.17.peg.1488"/>
<dbReference type="eggNOG" id="COG0228">
    <property type="taxonomic scope" value="Bacteria"/>
</dbReference>
<dbReference type="HOGENOM" id="CLU_100590_5_0_0"/>
<dbReference type="InParanoid" id="Q9RUT7"/>
<dbReference type="OrthoDB" id="9807878at2"/>
<dbReference type="Proteomes" id="UP000002524">
    <property type="component" value="Chromosome 1"/>
</dbReference>
<dbReference type="GO" id="GO:0005737">
    <property type="term" value="C:cytoplasm"/>
    <property type="evidence" value="ECO:0007669"/>
    <property type="project" value="UniProtKB-ARBA"/>
</dbReference>
<dbReference type="GO" id="GO:0015935">
    <property type="term" value="C:small ribosomal subunit"/>
    <property type="evidence" value="ECO:0000318"/>
    <property type="project" value="GO_Central"/>
</dbReference>
<dbReference type="GO" id="GO:0003735">
    <property type="term" value="F:structural constituent of ribosome"/>
    <property type="evidence" value="ECO:0000318"/>
    <property type="project" value="GO_Central"/>
</dbReference>
<dbReference type="GO" id="GO:0006412">
    <property type="term" value="P:translation"/>
    <property type="evidence" value="ECO:0007669"/>
    <property type="project" value="UniProtKB-UniRule"/>
</dbReference>
<dbReference type="FunFam" id="3.30.1320.10:FF:000005">
    <property type="entry name" value="30S ribosomal protein S16"/>
    <property type="match status" value="1"/>
</dbReference>
<dbReference type="Gene3D" id="3.30.1320.10">
    <property type="match status" value="1"/>
</dbReference>
<dbReference type="HAMAP" id="MF_00385">
    <property type="entry name" value="Ribosomal_bS16"/>
    <property type="match status" value="1"/>
</dbReference>
<dbReference type="InterPro" id="IPR000307">
    <property type="entry name" value="Ribosomal_bS16"/>
</dbReference>
<dbReference type="InterPro" id="IPR023803">
    <property type="entry name" value="Ribosomal_bS16_dom_sf"/>
</dbReference>
<dbReference type="NCBIfam" id="TIGR00002">
    <property type="entry name" value="S16"/>
    <property type="match status" value="1"/>
</dbReference>
<dbReference type="PANTHER" id="PTHR12919">
    <property type="entry name" value="30S RIBOSOMAL PROTEIN S16"/>
    <property type="match status" value="1"/>
</dbReference>
<dbReference type="PANTHER" id="PTHR12919:SF20">
    <property type="entry name" value="SMALL RIBOSOMAL SUBUNIT PROTEIN BS16M"/>
    <property type="match status" value="1"/>
</dbReference>
<dbReference type="Pfam" id="PF00886">
    <property type="entry name" value="Ribosomal_S16"/>
    <property type="match status" value="1"/>
</dbReference>
<dbReference type="SUPFAM" id="SSF54565">
    <property type="entry name" value="Ribosomal protein S16"/>
    <property type="match status" value="1"/>
</dbReference>
<accession>Q9RUT7</accession>
<reference key="1">
    <citation type="journal article" date="1999" name="Science">
        <title>Genome sequence of the radioresistant bacterium Deinococcus radiodurans R1.</title>
        <authorList>
            <person name="White O."/>
            <person name="Eisen J.A."/>
            <person name="Heidelberg J.F."/>
            <person name="Hickey E.K."/>
            <person name="Peterson J.D."/>
            <person name="Dodson R.J."/>
            <person name="Haft D.H."/>
            <person name="Gwinn M.L."/>
            <person name="Nelson W.C."/>
            <person name="Richardson D.L."/>
            <person name="Moffat K.S."/>
            <person name="Qin H."/>
            <person name="Jiang L."/>
            <person name="Pamphile W."/>
            <person name="Crosby M."/>
            <person name="Shen M."/>
            <person name="Vamathevan J.J."/>
            <person name="Lam P."/>
            <person name="McDonald L.A."/>
            <person name="Utterback T.R."/>
            <person name="Zalewski C."/>
            <person name="Makarova K.S."/>
            <person name="Aravind L."/>
            <person name="Daly M.J."/>
            <person name="Minton K.W."/>
            <person name="Fleischmann R.D."/>
            <person name="Ketchum K.A."/>
            <person name="Nelson K.E."/>
            <person name="Salzberg S.L."/>
            <person name="Smith H.O."/>
            <person name="Venter J.C."/>
            <person name="Fraser C.M."/>
        </authorList>
    </citation>
    <scope>NUCLEOTIDE SEQUENCE [LARGE SCALE GENOMIC DNA]</scope>
    <source>
        <strain>ATCC 13939 / DSM 20539 / JCM 16871 / CCUG 27074 / LMG 4051 / NBRC 15346 / NCIMB 9279 / VKM B-1422 / R1</strain>
    </source>
</reference>
<keyword id="KW-1185">Reference proteome</keyword>
<keyword id="KW-0687">Ribonucleoprotein</keyword>
<keyword id="KW-0689">Ribosomal protein</keyword>
<protein>
    <recommendedName>
        <fullName evidence="1">Small ribosomal subunit protein bS16</fullName>
    </recommendedName>
    <alternativeName>
        <fullName evidence="2">30S ribosomal protein S16</fullName>
    </alternativeName>
</protein>
<proteinExistence type="inferred from homology"/>